<protein>
    <recommendedName>
        <fullName evidence="1">Recombination-associated protein RdgC</fullName>
    </recommendedName>
</protein>
<feature type="chain" id="PRO_1000204027" description="Recombination-associated protein RdgC">
    <location>
        <begin position="1"/>
        <end position="306"/>
    </location>
</feature>
<proteinExistence type="inferred from homology"/>
<sequence>MWFKNLLIYRLTQDLPVDAEALEAAMATKLARPCASQELTTYGFVAPFGKGEDAPLVHVSGDFLLIAARKEERILPGSVVRDALKEKVEEIEAEQMRKVYKKERDQIKDEIIQAFLPRAFIRRSSTFAAIAPKQGLILVNSASPKRAEDLLSTLREVIGTLPVRPLTVKTAPTAIMTDWVTTQKPADDFFVLDECELRDTHEDGGIVRCKRQDLTSEEIQLHLTTGKVVTQLSLAWQDKLSFMLDDKMTVKRLKFEDLLQDQAEQDGGEEALGQLDASFTLMMLTFGDFLPALVEALGGEETPQGI</sequence>
<name>RDGC_PSEFS</name>
<gene>
    <name evidence="1" type="primary">rdgC</name>
    <name type="ordered locus">PFLU_1877</name>
</gene>
<evidence type="ECO:0000255" key="1">
    <source>
        <dbReference type="HAMAP-Rule" id="MF_00194"/>
    </source>
</evidence>
<reference key="1">
    <citation type="journal article" date="2009" name="Genome Biol.">
        <title>Genomic and genetic analyses of diversity and plant interactions of Pseudomonas fluorescens.</title>
        <authorList>
            <person name="Silby M.W."/>
            <person name="Cerdeno-Tarraga A.M."/>
            <person name="Vernikos G.S."/>
            <person name="Giddens S.R."/>
            <person name="Jackson R.W."/>
            <person name="Preston G.M."/>
            <person name="Zhang X.-X."/>
            <person name="Moon C.D."/>
            <person name="Gehrig S.M."/>
            <person name="Godfrey S.A.C."/>
            <person name="Knight C.G."/>
            <person name="Malone J.G."/>
            <person name="Robinson Z."/>
            <person name="Spiers A.J."/>
            <person name="Harris S."/>
            <person name="Challis G.L."/>
            <person name="Yaxley A.M."/>
            <person name="Harris D."/>
            <person name="Seeger K."/>
            <person name="Murphy L."/>
            <person name="Rutter S."/>
            <person name="Squares R."/>
            <person name="Quail M.A."/>
            <person name="Saunders E."/>
            <person name="Mavromatis K."/>
            <person name="Brettin T.S."/>
            <person name="Bentley S.D."/>
            <person name="Hothersall J."/>
            <person name="Stephens E."/>
            <person name="Thomas C.M."/>
            <person name="Parkhill J."/>
            <person name="Levy S.B."/>
            <person name="Rainey P.B."/>
            <person name="Thomson N.R."/>
        </authorList>
    </citation>
    <scope>NUCLEOTIDE SEQUENCE [LARGE SCALE GENOMIC DNA]</scope>
    <source>
        <strain>SBW25</strain>
    </source>
</reference>
<keyword id="KW-0963">Cytoplasm</keyword>
<keyword id="KW-0233">DNA recombination</keyword>
<dbReference type="EMBL" id="AM181176">
    <property type="protein sequence ID" value="CAY48123.1"/>
    <property type="molecule type" value="Genomic_DNA"/>
</dbReference>
<dbReference type="RefSeq" id="WP_012723141.1">
    <property type="nucleotide sequence ID" value="NC_012660.1"/>
</dbReference>
<dbReference type="SMR" id="C3K7N8"/>
<dbReference type="STRING" id="294.SRM1_01666"/>
<dbReference type="PATRIC" id="fig|216595.4.peg.2099"/>
<dbReference type="eggNOG" id="COG2974">
    <property type="taxonomic scope" value="Bacteria"/>
</dbReference>
<dbReference type="HOGENOM" id="CLU_052038_1_1_6"/>
<dbReference type="OrthoDB" id="5290530at2"/>
<dbReference type="GO" id="GO:0043590">
    <property type="term" value="C:bacterial nucleoid"/>
    <property type="evidence" value="ECO:0007669"/>
    <property type="project" value="TreeGrafter"/>
</dbReference>
<dbReference type="GO" id="GO:0005737">
    <property type="term" value="C:cytoplasm"/>
    <property type="evidence" value="ECO:0007669"/>
    <property type="project" value="UniProtKB-UniRule"/>
</dbReference>
<dbReference type="GO" id="GO:0003690">
    <property type="term" value="F:double-stranded DNA binding"/>
    <property type="evidence" value="ECO:0007669"/>
    <property type="project" value="TreeGrafter"/>
</dbReference>
<dbReference type="GO" id="GO:0006310">
    <property type="term" value="P:DNA recombination"/>
    <property type="evidence" value="ECO:0007669"/>
    <property type="project" value="UniProtKB-UniRule"/>
</dbReference>
<dbReference type="GO" id="GO:0000018">
    <property type="term" value="P:regulation of DNA recombination"/>
    <property type="evidence" value="ECO:0007669"/>
    <property type="project" value="TreeGrafter"/>
</dbReference>
<dbReference type="HAMAP" id="MF_00194">
    <property type="entry name" value="RdgC"/>
    <property type="match status" value="1"/>
</dbReference>
<dbReference type="InterPro" id="IPR007476">
    <property type="entry name" value="RdgC"/>
</dbReference>
<dbReference type="NCBIfam" id="NF001461">
    <property type="entry name" value="PRK00321.1-2"/>
    <property type="match status" value="1"/>
</dbReference>
<dbReference type="NCBIfam" id="NF001462">
    <property type="entry name" value="PRK00321.1-3"/>
    <property type="match status" value="1"/>
</dbReference>
<dbReference type="NCBIfam" id="NF001464">
    <property type="entry name" value="PRK00321.1-5"/>
    <property type="match status" value="1"/>
</dbReference>
<dbReference type="PANTHER" id="PTHR38103">
    <property type="entry name" value="RECOMBINATION-ASSOCIATED PROTEIN RDGC"/>
    <property type="match status" value="1"/>
</dbReference>
<dbReference type="PANTHER" id="PTHR38103:SF1">
    <property type="entry name" value="RECOMBINATION-ASSOCIATED PROTEIN RDGC"/>
    <property type="match status" value="1"/>
</dbReference>
<dbReference type="Pfam" id="PF04381">
    <property type="entry name" value="RdgC"/>
    <property type="match status" value="1"/>
</dbReference>
<comment type="function">
    <text evidence="1">May be involved in recombination.</text>
</comment>
<comment type="subcellular location">
    <subcellularLocation>
        <location evidence="1">Cytoplasm</location>
        <location evidence="1">Nucleoid</location>
    </subcellularLocation>
</comment>
<comment type="similarity">
    <text evidence="1">Belongs to the RdgC family.</text>
</comment>
<accession>C3K7N8</accession>
<organism>
    <name type="scientific">Pseudomonas fluorescens (strain SBW25)</name>
    <dbReference type="NCBI Taxonomy" id="216595"/>
    <lineage>
        <taxon>Bacteria</taxon>
        <taxon>Pseudomonadati</taxon>
        <taxon>Pseudomonadota</taxon>
        <taxon>Gammaproteobacteria</taxon>
        <taxon>Pseudomonadales</taxon>
        <taxon>Pseudomonadaceae</taxon>
        <taxon>Pseudomonas</taxon>
    </lineage>
</organism>